<sequence>MDYFTLFGLPARYQLDTQALSLRFQDLQRQYHPDKFASGSQAEQLAAVQQSATINQAWQTLRHPLMRAEYLLSLHGFDLASEQHTVRDTAFLMEQLELREELDEIEQAKDEARLESFIKRVKKMFDTRHQLMVEQLDNEAWDAAADTVRKLRFLDKLRSSAEQLEEKLLDF</sequence>
<organism>
    <name type="scientific">Escherichia coli (strain 55989 / EAEC)</name>
    <dbReference type="NCBI Taxonomy" id="585055"/>
    <lineage>
        <taxon>Bacteria</taxon>
        <taxon>Pseudomonadati</taxon>
        <taxon>Pseudomonadota</taxon>
        <taxon>Gammaproteobacteria</taxon>
        <taxon>Enterobacterales</taxon>
        <taxon>Enterobacteriaceae</taxon>
        <taxon>Escherichia</taxon>
    </lineage>
</organism>
<evidence type="ECO:0000255" key="1">
    <source>
        <dbReference type="HAMAP-Rule" id="MF_00682"/>
    </source>
</evidence>
<gene>
    <name evidence="1" type="primary">hscB</name>
    <name type="ordered locus">EC55989_2812</name>
</gene>
<name>HSCB_ECO55</name>
<proteinExistence type="inferred from homology"/>
<protein>
    <recommendedName>
        <fullName evidence="1">Co-chaperone protein HscB</fullName>
    </recommendedName>
    <alternativeName>
        <fullName evidence="1">Hsc20</fullName>
    </alternativeName>
</protein>
<feature type="chain" id="PRO_1000189912" description="Co-chaperone protein HscB">
    <location>
        <begin position="1"/>
        <end position="171"/>
    </location>
</feature>
<feature type="domain" description="J" evidence="1">
    <location>
        <begin position="2"/>
        <end position="74"/>
    </location>
</feature>
<comment type="function">
    <text evidence="1">Co-chaperone involved in the maturation of iron-sulfur cluster-containing proteins. Seems to help targeting proteins to be folded toward HscA.</text>
</comment>
<comment type="subunit">
    <text evidence="1">Interacts with HscA and stimulates its ATPase activity. Interacts with IscU.</text>
</comment>
<comment type="similarity">
    <text evidence="1">Belongs to the HscB family.</text>
</comment>
<accession>B7LDB9</accession>
<dbReference type="EMBL" id="CU928145">
    <property type="protein sequence ID" value="CAU98685.1"/>
    <property type="molecule type" value="Genomic_DNA"/>
</dbReference>
<dbReference type="RefSeq" id="WP_000384411.1">
    <property type="nucleotide sequence ID" value="NC_011748.1"/>
</dbReference>
<dbReference type="SMR" id="B7LDB9"/>
<dbReference type="GeneID" id="86947417"/>
<dbReference type="KEGG" id="eck:EC55989_2812"/>
<dbReference type="HOGENOM" id="CLU_068529_2_0_6"/>
<dbReference type="Proteomes" id="UP000000746">
    <property type="component" value="Chromosome"/>
</dbReference>
<dbReference type="GO" id="GO:1990230">
    <property type="term" value="C:iron-sulfur cluster transfer complex"/>
    <property type="evidence" value="ECO:0007669"/>
    <property type="project" value="TreeGrafter"/>
</dbReference>
<dbReference type="GO" id="GO:0001671">
    <property type="term" value="F:ATPase activator activity"/>
    <property type="evidence" value="ECO:0007669"/>
    <property type="project" value="InterPro"/>
</dbReference>
<dbReference type="GO" id="GO:0051087">
    <property type="term" value="F:protein-folding chaperone binding"/>
    <property type="evidence" value="ECO:0007669"/>
    <property type="project" value="InterPro"/>
</dbReference>
<dbReference type="GO" id="GO:0044571">
    <property type="term" value="P:[2Fe-2S] cluster assembly"/>
    <property type="evidence" value="ECO:0007669"/>
    <property type="project" value="InterPro"/>
</dbReference>
<dbReference type="GO" id="GO:0051259">
    <property type="term" value="P:protein complex oligomerization"/>
    <property type="evidence" value="ECO:0007669"/>
    <property type="project" value="InterPro"/>
</dbReference>
<dbReference type="GO" id="GO:0006457">
    <property type="term" value="P:protein folding"/>
    <property type="evidence" value="ECO:0007669"/>
    <property type="project" value="UniProtKB-UniRule"/>
</dbReference>
<dbReference type="CDD" id="cd06257">
    <property type="entry name" value="DnaJ"/>
    <property type="match status" value="1"/>
</dbReference>
<dbReference type="FunFam" id="1.10.287.110:FF:000008">
    <property type="entry name" value="Co-chaperone protein HscB"/>
    <property type="match status" value="1"/>
</dbReference>
<dbReference type="FunFam" id="1.20.1280.20:FF:000001">
    <property type="entry name" value="Co-chaperone protein HscB"/>
    <property type="match status" value="1"/>
</dbReference>
<dbReference type="Gene3D" id="1.10.287.110">
    <property type="entry name" value="DnaJ domain"/>
    <property type="match status" value="1"/>
</dbReference>
<dbReference type="Gene3D" id="1.20.1280.20">
    <property type="entry name" value="HscB, C-terminal domain"/>
    <property type="match status" value="1"/>
</dbReference>
<dbReference type="HAMAP" id="MF_00682">
    <property type="entry name" value="HscB"/>
    <property type="match status" value="1"/>
</dbReference>
<dbReference type="InterPro" id="IPR001623">
    <property type="entry name" value="DnaJ_domain"/>
</dbReference>
<dbReference type="InterPro" id="IPR004640">
    <property type="entry name" value="HscB"/>
</dbReference>
<dbReference type="InterPro" id="IPR036386">
    <property type="entry name" value="HscB_C_sf"/>
</dbReference>
<dbReference type="InterPro" id="IPR009073">
    <property type="entry name" value="HscB_oligo_C"/>
</dbReference>
<dbReference type="InterPro" id="IPR036869">
    <property type="entry name" value="J_dom_sf"/>
</dbReference>
<dbReference type="NCBIfam" id="TIGR00714">
    <property type="entry name" value="hscB"/>
    <property type="match status" value="1"/>
</dbReference>
<dbReference type="NCBIfam" id="NF003449">
    <property type="entry name" value="PRK05014.1"/>
    <property type="match status" value="1"/>
</dbReference>
<dbReference type="PANTHER" id="PTHR14021">
    <property type="entry name" value="IRON-SULFUR CLUSTER CO-CHAPERONE PROTEIN HSCB"/>
    <property type="match status" value="1"/>
</dbReference>
<dbReference type="PANTHER" id="PTHR14021:SF15">
    <property type="entry name" value="IRON-SULFUR CLUSTER CO-CHAPERONE PROTEIN HSCB"/>
    <property type="match status" value="1"/>
</dbReference>
<dbReference type="Pfam" id="PF07743">
    <property type="entry name" value="HSCB_C"/>
    <property type="match status" value="1"/>
</dbReference>
<dbReference type="SMART" id="SM00271">
    <property type="entry name" value="DnaJ"/>
    <property type="match status" value="1"/>
</dbReference>
<dbReference type="SUPFAM" id="SSF46565">
    <property type="entry name" value="Chaperone J-domain"/>
    <property type="match status" value="1"/>
</dbReference>
<dbReference type="SUPFAM" id="SSF47144">
    <property type="entry name" value="HSC20 (HSCB), C-terminal oligomerisation domain"/>
    <property type="match status" value="1"/>
</dbReference>
<dbReference type="PROSITE" id="PS50076">
    <property type="entry name" value="DNAJ_2"/>
    <property type="match status" value="1"/>
</dbReference>
<reference key="1">
    <citation type="journal article" date="2009" name="PLoS Genet.">
        <title>Organised genome dynamics in the Escherichia coli species results in highly diverse adaptive paths.</title>
        <authorList>
            <person name="Touchon M."/>
            <person name="Hoede C."/>
            <person name="Tenaillon O."/>
            <person name="Barbe V."/>
            <person name="Baeriswyl S."/>
            <person name="Bidet P."/>
            <person name="Bingen E."/>
            <person name="Bonacorsi S."/>
            <person name="Bouchier C."/>
            <person name="Bouvet O."/>
            <person name="Calteau A."/>
            <person name="Chiapello H."/>
            <person name="Clermont O."/>
            <person name="Cruveiller S."/>
            <person name="Danchin A."/>
            <person name="Diard M."/>
            <person name="Dossat C."/>
            <person name="Karoui M.E."/>
            <person name="Frapy E."/>
            <person name="Garry L."/>
            <person name="Ghigo J.M."/>
            <person name="Gilles A.M."/>
            <person name="Johnson J."/>
            <person name="Le Bouguenec C."/>
            <person name="Lescat M."/>
            <person name="Mangenot S."/>
            <person name="Martinez-Jehanne V."/>
            <person name="Matic I."/>
            <person name="Nassif X."/>
            <person name="Oztas S."/>
            <person name="Petit M.A."/>
            <person name="Pichon C."/>
            <person name="Rouy Z."/>
            <person name="Ruf C.S."/>
            <person name="Schneider D."/>
            <person name="Tourret J."/>
            <person name="Vacherie B."/>
            <person name="Vallenet D."/>
            <person name="Medigue C."/>
            <person name="Rocha E.P.C."/>
            <person name="Denamur E."/>
        </authorList>
    </citation>
    <scope>NUCLEOTIDE SEQUENCE [LARGE SCALE GENOMIC DNA]</scope>
    <source>
        <strain>55989 / EAEC</strain>
    </source>
</reference>
<keyword id="KW-0143">Chaperone</keyword>
<keyword id="KW-1185">Reference proteome</keyword>